<proteinExistence type="inferred from homology"/>
<gene>
    <name type="primary">RTC5</name>
    <name type="ORF">UREG_02754</name>
</gene>
<organism>
    <name type="scientific">Uncinocarpus reesii (strain UAMH 1704)</name>
    <dbReference type="NCBI Taxonomy" id="336963"/>
    <lineage>
        <taxon>Eukaryota</taxon>
        <taxon>Fungi</taxon>
        <taxon>Dikarya</taxon>
        <taxon>Ascomycota</taxon>
        <taxon>Pezizomycotina</taxon>
        <taxon>Eurotiomycetes</taxon>
        <taxon>Eurotiomycetidae</taxon>
        <taxon>Onygenales</taxon>
        <taxon>Onygenaceae</taxon>
        <taxon>Uncinocarpus</taxon>
    </lineage>
</organism>
<keyword id="KW-0963">Cytoplasm</keyword>
<keyword id="KW-1185">Reference proteome</keyword>
<feature type="chain" id="PRO_0000408848" description="Restriction of telomere capping protein 5">
    <location>
        <begin position="1"/>
        <end position="660"/>
    </location>
</feature>
<feature type="domain" description="TLDc" evidence="2">
    <location>
        <begin position="359"/>
        <end position="587"/>
    </location>
</feature>
<feature type="region of interest" description="Disordered" evidence="3">
    <location>
        <begin position="153"/>
        <end position="199"/>
    </location>
</feature>
<comment type="function">
    <text evidence="1">May be involved in a process influencing telomere capping.</text>
</comment>
<comment type="subcellular location">
    <subcellularLocation>
        <location evidence="1">Cytoplasm</location>
    </subcellularLocation>
</comment>
<comment type="similarity">
    <text evidence="4">Belongs to the RTC5 family.</text>
</comment>
<sequence length="660" mass="72109">MGAGQSTTTTEGRSSPEEMSHLLAQRFASKCFTPLELTHLEDNFNSQALDEHGLRYWNEEILSRFLGIPDGAGEKASPQTDATLDAGPVLFRMVSYLGAFPFHNTLAPSVLTYDAIVKVIVLLTERYGRVLKRGRKDRMKLLFGSLADVGRTQTEKQRETSQVDTKMSSDEAYSTDGASSNITGFSIDAPANDGEEEDDDDDLALAALESLDAIEVFKHDQRLDRSVYKARISVSTFRRLLALLLVIAPLHPMGRRQMIQTDAESIDAVQPSWIASCSLGDEANGDGHYLSDFSRVITTSLPFLFDPLTPLFEHFLFSKNLDLSKRKDSHQSHEESNSPSPPPSPHLECVFLPGHFETNILNSAILSHLSFFLSTSYPIPNLFRNQTRLHPVFSSDFHGESLTAFSHHVLTWHAPSLLLLKGVTGSSSSKQETVLAGAYLPEPWKRSTSPLSTPMSDFLDTSRFPCLFQLLPTHTVLQAAPAFKSLKSNMPVVSFSTNSGIAVGCMIPPSSRTSLNNELQPRPSGGGSLIIDPALENATFYVSDGLHGDGVFLPPGLSPSSSLSLSASATSSTMSISIHSIEVWGVVPTPAELDANLDPNSPKDAISMQKAMWDFEAREAERRKTIHLNVGGGDSEAQTGRALLEMAGIIGDSQYSPRRR</sequence>
<reference key="1">
    <citation type="journal article" date="2009" name="Genome Res.">
        <title>Comparative genomic analyses of the human fungal pathogens Coccidioides and their relatives.</title>
        <authorList>
            <person name="Sharpton T.J."/>
            <person name="Stajich J.E."/>
            <person name="Rounsley S.D."/>
            <person name="Gardner M.J."/>
            <person name="Wortman J.R."/>
            <person name="Jordar V.S."/>
            <person name="Maiti R."/>
            <person name="Kodira C.D."/>
            <person name="Neafsey D.E."/>
            <person name="Zeng Q."/>
            <person name="Hung C.-Y."/>
            <person name="McMahan C."/>
            <person name="Muszewska A."/>
            <person name="Grynberg M."/>
            <person name="Mandel M.A."/>
            <person name="Kellner E.M."/>
            <person name="Barker B.M."/>
            <person name="Galgiani J.N."/>
            <person name="Orbach M.J."/>
            <person name="Kirkland T.N."/>
            <person name="Cole G.T."/>
            <person name="Henn M.R."/>
            <person name="Birren B.W."/>
            <person name="Taylor J.W."/>
        </authorList>
    </citation>
    <scope>NUCLEOTIDE SEQUENCE [LARGE SCALE GENOMIC DNA]</scope>
    <source>
        <strain>UAMH 1704</strain>
    </source>
</reference>
<accession>C4JHR8</accession>
<name>RTC5_UNCRE</name>
<protein>
    <recommendedName>
        <fullName>Restriction of telomere capping protein 5</fullName>
    </recommendedName>
</protein>
<dbReference type="EMBL" id="CH476615">
    <property type="protein sequence ID" value="EEP77905.1"/>
    <property type="molecule type" value="Genomic_DNA"/>
</dbReference>
<dbReference type="RefSeq" id="XP_002543238.1">
    <property type="nucleotide sequence ID" value="XM_002543192.1"/>
</dbReference>
<dbReference type="SMR" id="C4JHR8"/>
<dbReference type="FunCoup" id="C4JHR8">
    <property type="interactions" value="4"/>
</dbReference>
<dbReference type="STRING" id="336963.C4JHR8"/>
<dbReference type="GeneID" id="8437541"/>
<dbReference type="KEGG" id="ure:UREG_02754"/>
<dbReference type="VEuPathDB" id="FungiDB:UREG_02754"/>
<dbReference type="eggNOG" id="ENOG502QV3R">
    <property type="taxonomic scope" value="Eukaryota"/>
</dbReference>
<dbReference type="HOGENOM" id="CLU_011918_1_0_1"/>
<dbReference type="InParanoid" id="C4JHR8"/>
<dbReference type="OMA" id="KWEFEAR"/>
<dbReference type="OrthoDB" id="289228at2759"/>
<dbReference type="Proteomes" id="UP000002058">
    <property type="component" value="Unassembled WGS sequence"/>
</dbReference>
<dbReference type="GO" id="GO:0005737">
    <property type="term" value="C:cytoplasm"/>
    <property type="evidence" value="ECO:0007669"/>
    <property type="project" value="UniProtKB-SubCell"/>
</dbReference>
<dbReference type="InterPro" id="IPR006571">
    <property type="entry name" value="TLDc_dom"/>
</dbReference>
<dbReference type="Pfam" id="PF07534">
    <property type="entry name" value="TLD"/>
    <property type="match status" value="1"/>
</dbReference>
<dbReference type="SMART" id="SM00584">
    <property type="entry name" value="TLDc"/>
    <property type="match status" value="1"/>
</dbReference>
<dbReference type="PROSITE" id="PS51886">
    <property type="entry name" value="TLDC"/>
    <property type="match status" value="1"/>
</dbReference>
<evidence type="ECO:0000250" key="1"/>
<evidence type="ECO:0000255" key="2">
    <source>
        <dbReference type="PROSITE-ProRule" id="PRU01234"/>
    </source>
</evidence>
<evidence type="ECO:0000256" key="3">
    <source>
        <dbReference type="SAM" id="MobiDB-lite"/>
    </source>
</evidence>
<evidence type="ECO:0000305" key="4"/>